<organism>
    <name type="scientific">Deinococcus geothermalis (strain DSM 11300 / CIP 105573 / AG-3a)</name>
    <dbReference type="NCBI Taxonomy" id="319795"/>
    <lineage>
        <taxon>Bacteria</taxon>
        <taxon>Thermotogati</taxon>
        <taxon>Deinococcota</taxon>
        <taxon>Deinococci</taxon>
        <taxon>Deinococcales</taxon>
        <taxon>Deinococcaceae</taxon>
        <taxon>Deinococcus</taxon>
    </lineage>
</organism>
<keyword id="KW-0687">Ribonucleoprotein</keyword>
<keyword id="KW-0689">Ribosomal protein</keyword>
<accession>Q1J0P3</accession>
<feature type="chain" id="PRO_1000006997" description="Large ribosomal subunit protein bL12">
    <location>
        <begin position="1"/>
        <end position="122"/>
    </location>
</feature>
<name>RL7_DEIGD</name>
<gene>
    <name evidence="1" type="primary">rplL</name>
    <name type="ordered locus">Dgeo_0639</name>
</gene>
<protein>
    <recommendedName>
        <fullName evidence="1">Large ribosomal subunit protein bL12</fullName>
    </recommendedName>
    <alternativeName>
        <fullName evidence="2">50S ribosomal protein L7/L12</fullName>
    </alternativeName>
</protein>
<comment type="function">
    <text evidence="1">Forms part of the ribosomal stalk which helps the ribosome interact with GTP-bound translation factors. Is thus essential for accurate translation.</text>
</comment>
<comment type="subunit">
    <text evidence="1">Homodimer. Part of the ribosomal stalk of the 50S ribosomal subunit. Forms a multimeric L10(L12)X complex, where L10 forms an elongated spine to which 2 to 4 L12 dimers bind in a sequential fashion. Binds GTP-bound translation factors.</text>
</comment>
<comment type="similarity">
    <text evidence="1">Belongs to the bacterial ribosomal protein bL12 family.</text>
</comment>
<proteinExistence type="inferred from homology"/>
<dbReference type="EMBL" id="CP000359">
    <property type="protein sequence ID" value="ABF44941.1"/>
    <property type="molecule type" value="Genomic_DNA"/>
</dbReference>
<dbReference type="RefSeq" id="WP_011529782.1">
    <property type="nucleotide sequence ID" value="NC_008025.1"/>
</dbReference>
<dbReference type="SMR" id="Q1J0P3"/>
<dbReference type="STRING" id="319795.Dgeo_0639"/>
<dbReference type="KEGG" id="dge:Dgeo_0639"/>
<dbReference type="eggNOG" id="COG0222">
    <property type="taxonomic scope" value="Bacteria"/>
</dbReference>
<dbReference type="HOGENOM" id="CLU_086499_3_0_0"/>
<dbReference type="Proteomes" id="UP000002431">
    <property type="component" value="Chromosome"/>
</dbReference>
<dbReference type="GO" id="GO:0022625">
    <property type="term" value="C:cytosolic large ribosomal subunit"/>
    <property type="evidence" value="ECO:0007669"/>
    <property type="project" value="TreeGrafter"/>
</dbReference>
<dbReference type="GO" id="GO:0003729">
    <property type="term" value="F:mRNA binding"/>
    <property type="evidence" value="ECO:0007669"/>
    <property type="project" value="TreeGrafter"/>
</dbReference>
<dbReference type="GO" id="GO:0003735">
    <property type="term" value="F:structural constituent of ribosome"/>
    <property type="evidence" value="ECO:0007669"/>
    <property type="project" value="InterPro"/>
</dbReference>
<dbReference type="GO" id="GO:0006412">
    <property type="term" value="P:translation"/>
    <property type="evidence" value="ECO:0007669"/>
    <property type="project" value="UniProtKB-UniRule"/>
</dbReference>
<dbReference type="CDD" id="cd00387">
    <property type="entry name" value="Ribosomal_L7_L12"/>
    <property type="match status" value="1"/>
</dbReference>
<dbReference type="FunFam" id="3.30.1390.10:FF:000001">
    <property type="entry name" value="50S ribosomal protein L7/L12"/>
    <property type="match status" value="1"/>
</dbReference>
<dbReference type="Gene3D" id="3.30.1390.10">
    <property type="match status" value="1"/>
</dbReference>
<dbReference type="Gene3D" id="1.20.5.710">
    <property type="entry name" value="Single helix bin"/>
    <property type="match status" value="1"/>
</dbReference>
<dbReference type="HAMAP" id="MF_00368">
    <property type="entry name" value="Ribosomal_bL12"/>
    <property type="match status" value="1"/>
</dbReference>
<dbReference type="InterPro" id="IPR000206">
    <property type="entry name" value="Ribosomal_bL12"/>
</dbReference>
<dbReference type="InterPro" id="IPR013823">
    <property type="entry name" value="Ribosomal_bL12_C"/>
</dbReference>
<dbReference type="InterPro" id="IPR014719">
    <property type="entry name" value="Ribosomal_bL12_C/ClpS-like"/>
</dbReference>
<dbReference type="InterPro" id="IPR008932">
    <property type="entry name" value="Ribosomal_bL12_oligo"/>
</dbReference>
<dbReference type="InterPro" id="IPR036235">
    <property type="entry name" value="Ribosomal_bL12_oligo_N_sf"/>
</dbReference>
<dbReference type="NCBIfam" id="TIGR00855">
    <property type="entry name" value="L12"/>
    <property type="match status" value="1"/>
</dbReference>
<dbReference type="PANTHER" id="PTHR45987">
    <property type="entry name" value="39S RIBOSOMAL PROTEIN L12"/>
    <property type="match status" value="1"/>
</dbReference>
<dbReference type="PANTHER" id="PTHR45987:SF4">
    <property type="entry name" value="LARGE RIBOSOMAL SUBUNIT PROTEIN BL12M"/>
    <property type="match status" value="1"/>
</dbReference>
<dbReference type="Pfam" id="PF00542">
    <property type="entry name" value="Ribosomal_L12"/>
    <property type="match status" value="1"/>
</dbReference>
<dbReference type="Pfam" id="PF16320">
    <property type="entry name" value="Ribosomal_L12_N"/>
    <property type="match status" value="1"/>
</dbReference>
<dbReference type="SUPFAM" id="SSF54736">
    <property type="entry name" value="ClpS-like"/>
    <property type="match status" value="1"/>
</dbReference>
<dbReference type="SUPFAM" id="SSF48300">
    <property type="entry name" value="Ribosomal protein L7/12, oligomerisation (N-terminal) domain"/>
    <property type="match status" value="1"/>
</dbReference>
<reference key="1">
    <citation type="submission" date="2006-04" db="EMBL/GenBank/DDBJ databases">
        <title>Complete sequence of chromosome of Deinococcus geothermalis DSM 11300.</title>
        <authorList>
            <person name="Copeland A."/>
            <person name="Lucas S."/>
            <person name="Lapidus A."/>
            <person name="Barry K."/>
            <person name="Detter J.C."/>
            <person name="Glavina del Rio T."/>
            <person name="Hammon N."/>
            <person name="Israni S."/>
            <person name="Dalin E."/>
            <person name="Tice H."/>
            <person name="Pitluck S."/>
            <person name="Brettin T."/>
            <person name="Bruce D."/>
            <person name="Han C."/>
            <person name="Tapia R."/>
            <person name="Saunders E."/>
            <person name="Gilna P."/>
            <person name="Schmutz J."/>
            <person name="Larimer F."/>
            <person name="Land M."/>
            <person name="Hauser L."/>
            <person name="Kyrpides N."/>
            <person name="Kim E."/>
            <person name="Daly M.J."/>
            <person name="Fredrickson J.K."/>
            <person name="Makarova K.S."/>
            <person name="Gaidamakova E.K."/>
            <person name="Zhai M."/>
            <person name="Richardson P."/>
        </authorList>
    </citation>
    <scope>NUCLEOTIDE SEQUENCE [LARGE SCALE GENOMIC DNA]</scope>
    <source>
        <strain>DSM 11300 / CIP 105573 / AG-3a</strain>
    </source>
</reference>
<evidence type="ECO:0000255" key="1">
    <source>
        <dbReference type="HAMAP-Rule" id="MF_00368"/>
    </source>
</evidence>
<evidence type="ECO:0000305" key="2"/>
<sequence>MAYDKQALIDQLSTLTIMELADLIDGLKEQWGVTAAVAVAGPGAGAAAPAAEEKTEFDVILVDAGASKINVIKELRAITGLGLKEAKDLSEKGGAIKEGVSKEDAEKFKAQLEGAGAKVEIR</sequence>